<keyword id="KW-0002">3D-structure</keyword>
<keyword id="KW-0687">Ribonucleoprotein</keyword>
<keyword id="KW-0689">Ribosomal protein</keyword>
<keyword id="KW-0694">RNA-binding</keyword>
<keyword id="KW-0699">rRNA-binding</keyword>
<reference key="1">
    <citation type="submission" date="2007-02" db="EMBL/GenBank/DDBJ databases">
        <title>Complete sequence of Pyrobaculum calidifontis JCM 11548.</title>
        <authorList>
            <consortium name="US DOE Joint Genome Institute"/>
            <person name="Copeland A."/>
            <person name="Lucas S."/>
            <person name="Lapidus A."/>
            <person name="Barry K."/>
            <person name="Glavina del Rio T."/>
            <person name="Dalin E."/>
            <person name="Tice H."/>
            <person name="Pitluck S."/>
            <person name="Chain P."/>
            <person name="Malfatti S."/>
            <person name="Shin M."/>
            <person name="Vergez L."/>
            <person name="Schmutz J."/>
            <person name="Larimer F."/>
            <person name="Land M."/>
            <person name="Hauser L."/>
            <person name="Kyrpides N."/>
            <person name="Mikhailova N."/>
            <person name="Cozen A.E."/>
            <person name="Fitz-Gibbon S.T."/>
            <person name="House C.H."/>
            <person name="Saltikov C."/>
            <person name="Lowe T.M."/>
            <person name="Richardson P."/>
        </authorList>
    </citation>
    <scope>NUCLEOTIDE SEQUENCE [LARGE SCALE GENOMIC DNA]</scope>
    <source>
        <strain>DSM 21063 / JCM 11548 / VA1</strain>
    </source>
</reference>
<evidence type="ECO:0000255" key="1">
    <source>
        <dbReference type="HAMAP-Rule" id="MF_01325"/>
    </source>
</evidence>
<evidence type="ECO:0000256" key="2">
    <source>
        <dbReference type="SAM" id="MobiDB-lite"/>
    </source>
</evidence>
<evidence type="ECO:0000305" key="3"/>
<comment type="function">
    <text evidence="1">One of the primary rRNA binding proteins, it binds directly near the 3'-end of the 23S rRNA, where it nucleates assembly of the 50S subunit.</text>
</comment>
<comment type="subunit">
    <text evidence="1">Part of the 50S ribosomal subunit. Forms a cluster with proteins L14 and L24e.</text>
</comment>
<comment type="similarity">
    <text evidence="1">Belongs to the universal ribosomal protein uL3 family.</text>
</comment>
<name>RL3_PYRCJ</name>
<organism>
    <name type="scientific">Pyrobaculum calidifontis (strain DSM 21063 / JCM 11548 / VA1)</name>
    <dbReference type="NCBI Taxonomy" id="410359"/>
    <lineage>
        <taxon>Archaea</taxon>
        <taxon>Thermoproteota</taxon>
        <taxon>Thermoprotei</taxon>
        <taxon>Thermoproteales</taxon>
        <taxon>Thermoproteaceae</taxon>
        <taxon>Pyrobaculum</taxon>
    </lineage>
</organism>
<sequence length="338" mass="37182">MGLKINRPRRGSMGVYPRKRAADIVPRVRTWPEVNLGKPTLLGFAAYKAGMLHAVVVDDRPTSPLYGKEVVKAVTVLDAPPLYVAAVRLYTLDPTNGYKVAVGEAWVSEPPADLRRVLTLPEKFDTEKQLKALEEYRDVAVDVRVLVATQPRLSGIGKKTPEVLEIPVGGVPSIDERINFAISLLGKTVSPKDVFTPGQLVDVIAVTKGKGYQGVVKRFGVTILPRWHKHRKGHRRTGTIGPQAPALMFTQPRPGQMGFHQRTEYNKRILKIGDNGAEITPKSGFPHYGVIKGPYILLQGSVPGARKRLVVLRYPVRPPKKAPPAAEPQVVWVSSQSI</sequence>
<proteinExistence type="evidence at protein level"/>
<gene>
    <name evidence="1" type="primary">rpl3</name>
    <name type="ordered locus">Pcal_1583</name>
</gene>
<accession>A3MWI4</accession>
<protein>
    <recommendedName>
        <fullName evidence="1">Large ribosomal subunit protein uL3</fullName>
    </recommendedName>
    <alternativeName>
        <fullName evidence="3">50S ribosomal protein L3</fullName>
    </alternativeName>
</protein>
<feature type="chain" id="PRO_0000353625" description="Large ribosomal subunit protein uL3">
    <location>
        <begin position="1"/>
        <end position="338"/>
    </location>
</feature>
<feature type="region of interest" description="Disordered" evidence="2">
    <location>
        <begin position="228"/>
        <end position="255"/>
    </location>
</feature>
<feature type="compositionally biased region" description="Basic residues" evidence="2">
    <location>
        <begin position="228"/>
        <end position="237"/>
    </location>
</feature>
<dbReference type="EMBL" id="CP000561">
    <property type="protein sequence ID" value="ABO09001.1"/>
    <property type="molecule type" value="Genomic_DNA"/>
</dbReference>
<dbReference type="RefSeq" id="WP_011850259.1">
    <property type="nucleotide sequence ID" value="NC_009073.1"/>
</dbReference>
<dbReference type="PDB" id="9E6Q">
    <property type="method" value="EM"/>
    <property type="resolution" value="1.95 A"/>
    <property type="chains" value="AB=1-338"/>
</dbReference>
<dbReference type="PDB" id="9E71">
    <property type="method" value="EM"/>
    <property type="resolution" value="2.36 A"/>
    <property type="chains" value="AB=1-338"/>
</dbReference>
<dbReference type="PDB" id="9E7F">
    <property type="method" value="EM"/>
    <property type="resolution" value="2.53 A"/>
    <property type="chains" value="AB=1-338"/>
</dbReference>
<dbReference type="PDBsum" id="9E6Q"/>
<dbReference type="PDBsum" id="9E71"/>
<dbReference type="PDBsum" id="9E7F"/>
<dbReference type="EMDB" id="EMD-47578"/>
<dbReference type="EMDB" id="EMD-47628"/>
<dbReference type="EMDB" id="EMD-47668"/>
<dbReference type="SMR" id="A3MWI4"/>
<dbReference type="STRING" id="410359.Pcal_1583"/>
<dbReference type="GeneID" id="4909593"/>
<dbReference type="KEGG" id="pcl:Pcal_1583"/>
<dbReference type="eggNOG" id="arCOG04070">
    <property type="taxonomic scope" value="Archaea"/>
</dbReference>
<dbReference type="HOGENOM" id="CLU_033361_2_0_2"/>
<dbReference type="OrthoDB" id="6121at2157"/>
<dbReference type="Proteomes" id="UP000001431">
    <property type="component" value="Chromosome"/>
</dbReference>
<dbReference type="GO" id="GO:0022625">
    <property type="term" value="C:cytosolic large ribosomal subunit"/>
    <property type="evidence" value="ECO:0007669"/>
    <property type="project" value="TreeGrafter"/>
</dbReference>
<dbReference type="GO" id="GO:0019843">
    <property type="term" value="F:rRNA binding"/>
    <property type="evidence" value="ECO:0007669"/>
    <property type="project" value="UniProtKB-UniRule"/>
</dbReference>
<dbReference type="GO" id="GO:0003735">
    <property type="term" value="F:structural constituent of ribosome"/>
    <property type="evidence" value="ECO:0007669"/>
    <property type="project" value="InterPro"/>
</dbReference>
<dbReference type="GO" id="GO:0006412">
    <property type="term" value="P:translation"/>
    <property type="evidence" value="ECO:0007669"/>
    <property type="project" value="UniProtKB-UniRule"/>
</dbReference>
<dbReference type="Gene3D" id="3.30.1430.10">
    <property type="match status" value="1"/>
</dbReference>
<dbReference type="Gene3D" id="4.10.960.10">
    <property type="entry name" value="Ribosomal protein L3, domain 3"/>
    <property type="match status" value="1"/>
</dbReference>
<dbReference type="Gene3D" id="2.40.30.10">
    <property type="entry name" value="Translation factors"/>
    <property type="match status" value="1"/>
</dbReference>
<dbReference type="HAMAP" id="MF_01325_A">
    <property type="entry name" value="Ribosomal_uL3_A"/>
    <property type="match status" value="1"/>
</dbReference>
<dbReference type="InterPro" id="IPR045077">
    <property type="entry name" value="L3_arc_euk"/>
</dbReference>
<dbReference type="InterPro" id="IPR044892">
    <property type="entry name" value="Ribosomal_L3_dom_3_arc_sf"/>
</dbReference>
<dbReference type="InterPro" id="IPR000597">
    <property type="entry name" value="Ribosomal_uL3"/>
</dbReference>
<dbReference type="InterPro" id="IPR019928">
    <property type="entry name" value="Ribosomal_uL3_arc"/>
</dbReference>
<dbReference type="InterPro" id="IPR019926">
    <property type="entry name" value="Ribosomal_uL3_CS"/>
</dbReference>
<dbReference type="InterPro" id="IPR009000">
    <property type="entry name" value="Transl_B-barrel_sf"/>
</dbReference>
<dbReference type="NCBIfam" id="TIGR03626">
    <property type="entry name" value="L3_arch"/>
    <property type="match status" value="1"/>
</dbReference>
<dbReference type="NCBIfam" id="NF003261">
    <property type="entry name" value="PRK04231.1"/>
    <property type="match status" value="1"/>
</dbReference>
<dbReference type="PANTHER" id="PTHR11363">
    <property type="entry name" value="60S RIBOSOMAL PROTEIN L3-RELATED"/>
    <property type="match status" value="1"/>
</dbReference>
<dbReference type="PANTHER" id="PTHR11363:SF5">
    <property type="entry name" value="LARGE RIBOSOMAL SUBUNIT PROTEIN UL3"/>
    <property type="match status" value="1"/>
</dbReference>
<dbReference type="Pfam" id="PF00297">
    <property type="entry name" value="Ribosomal_L3"/>
    <property type="match status" value="1"/>
</dbReference>
<dbReference type="SUPFAM" id="SSF50447">
    <property type="entry name" value="Translation proteins"/>
    <property type="match status" value="1"/>
</dbReference>
<dbReference type="PROSITE" id="PS00474">
    <property type="entry name" value="RIBOSOMAL_L3"/>
    <property type="match status" value="1"/>
</dbReference>